<proteinExistence type="inferred from homology"/>
<protein>
    <recommendedName>
        <fullName evidence="1">Citrate lyase acyl carrier protein</fullName>
    </recommendedName>
    <alternativeName>
        <fullName evidence="1">Citrate lyase gamma chain</fullName>
    </alternativeName>
</protein>
<gene>
    <name evidence="1" type="primary">citD</name>
    <name type="ordered locus">Rfer_2409</name>
</gene>
<dbReference type="EMBL" id="CP000267">
    <property type="protein sequence ID" value="ABD70126.1"/>
    <property type="molecule type" value="Genomic_DNA"/>
</dbReference>
<dbReference type="RefSeq" id="WP_011464694.1">
    <property type="nucleotide sequence ID" value="NC_007908.1"/>
</dbReference>
<dbReference type="SMR" id="Q21VS7"/>
<dbReference type="STRING" id="338969.Rfer_2409"/>
<dbReference type="KEGG" id="rfr:Rfer_2409"/>
<dbReference type="eggNOG" id="COG3052">
    <property type="taxonomic scope" value="Bacteria"/>
</dbReference>
<dbReference type="HOGENOM" id="CLU_158489_0_0_4"/>
<dbReference type="OrthoDB" id="9798736at2"/>
<dbReference type="Proteomes" id="UP000008332">
    <property type="component" value="Chromosome"/>
</dbReference>
<dbReference type="GO" id="GO:0005737">
    <property type="term" value="C:cytoplasm"/>
    <property type="evidence" value="ECO:0007669"/>
    <property type="project" value="UniProtKB-SubCell"/>
</dbReference>
<dbReference type="HAMAP" id="MF_00805">
    <property type="entry name" value="CitD"/>
    <property type="match status" value="1"/>
</dbReference>
<dbReference type="InterPro" id="IPR006495">
    <property type="entry name" value="CitD"/>
</dbReference>
<dbReference type="InterPro" id="IPR023439">
    <property type="entry name" value="Mal_deCO2ase/Cit_lyase_ACP"/>
</dbReference>
<dbReference type="NCBIfam" id="TIGR01608">
    <property type="entry name" value="citD"/>
    <property type="match status" value="1"/>
</dbReference>
<dbReference type="NCBIfam" id="NF009726">
    <property type="entry name" value="PRK13253.1"/>
    <property type="match status" value="1"/>
</dbReference>
<dbReference type="Pfam" id="PF06857">
    <property type="entry name" value="ACP"/>
    <property type="match status" value="1"/>
</dbReference>
<dbReference type="PIRSF" id="PIRSF002736">
    <property type="entry name" value="Citrt_lyas_gamma"/>
    <property type="match status" value="1"/>
</dbReference>
<feature type="chain" id="PRO_1000047077" description="Citrate lyase acyl carrier protein">
    <location>
        <begin position="1"/>
        <end position="98"/>
    </location>
</feature>
<feature type="modified residue" description="O-(phosphoribosyl dephospho-coenzyme A)serine" evidence="1">
    <location>
        <position position="14"/>
    </location>
</feature>
<keyword id="KW-0963">Cytoplasm</keyword>
<keyword id="KW-0597">Phosphoprotein</keyword>
<keyword id="KW-1185">Reference proteome</keyword>
<name>CITD_ALBFT</name>
<organism>
    <name type="scientific">Albidiferax ferrireducens (strain ATCC BAA-621 / DSM 15236 / T118)</name>
    <name type="common">Rhodoferax ferrireducens</name>
    <dbReference type="NCBI Taxonomy" id="338969"/>
    <lineage>
        <taxon>Bacteria</taxon>
        <taxon>Pseudomonadati</taxon>
        <taxon>Pseudomonadota</taxon>
        <taxon>Betaproteobacteria</taxon>
        <taxon>Burkholderiales</taxon>
        <taxon>Comamonadaceae</taxon>
        <taxon>Rhodoferax</taxon>
    </lineage>
</organism>
<evidence type="ECO:0000255" key="1">
    <source>
        <dbReference type="HAMAP-Rule" id="MF_00805"/>
    </source>
</evidence>
<sequence>MKIIKEAVAGTLESSDLLVKVAPGLPDRLDIHIRSEVMRQFGAHIRAVIDDTLGKLGVTEGDVTVEDKGALDCAIRARLQTAVLRSVGDVKIEWEKLQ</sequence>
<reference key="1">
    <citation type="submission" date="2006-02" db="EMBL/GenBank/DDBJ databases">
        <title>Complete sequence of chromosome of Rhodoferax ferrireducens DSM 15236.</title>
        <authorList>
            <person name="Copeland A."/>
            <person name="Lucas S."/>
            <person name="Lapidus A."/>
            <person name="Barry K."/>
            <person name="Detter J.C."/>
            <person name="Glavina del Rio T."/>
            <person name="Hammon N."/>
            <person name="Israni S."/>
            <person name="Pitluck S."/>
            <person name="Brettin T."/>
            <person name="Bruce D."/>
            <person name="Han C."/>
            <person name="Tapia R."/>
            <person name="Gilna P."/>
            <person name="Kiss H."/>
            <person name="Schmutz J."/>
            <person name="Larimer F."/>
            <person name="Land M."/>
            <person name="Kyrpides N."/>
            <person name="Ivanova N."/>
            <person name="Richardson P."/>
        </authorList>
    </citation>
    <scope>NUCLEOTIDE SEQUENCE [LARGE SCALE GENOMIC DNA]</scope>
    <source>
        <strain>ATCC BAA-621 / DSM 15236 / T118</strain>
    </source>
</reference>
<comment type="function">
    <text evidence="1">Covalent carrier of the coenzyme of citrate lyase.</text>
</comment>
<comment type="subunit">
    <text evidence="1">Oligomer with a subunit composition of (alpha,beta,gamma)6.</text>
</comment>
<comment type="subcellular location">
    <subcellularLocation>
        <location evidence="1">Cytoplasm</location>
    </subcellularLocation>
</comment>
<comment type="similarity">
    <text evidence="1">Belongs to the CitD family.</text>
</comment>
<accession>Q21VS7</accession>